<reference key="1">
    <citation type="journal article" date="2000" name="Nature">
        <title>Complete genome sequence of Pseudomonas aeruginosa PAO1, an opportunistic pathogen.</title>
        <authorList>
            <person name="Stover C.K."/>
            <person name="Pham X.-Q.T."/>
            <person name="Erwin A.L."/>
            <person name="Mizoguchi S.D."/>
            <person name="Warrener P."/>
            <person name="Hickey M.J."/>
            <person name="Brinkman F.S.L."/>
            <person name="Hufnagle W.O."/>
            <person name="Kowalik D.J."/>
            <person name="Lagrou M."/>
            <person name="Garber R.L."/>
            <person name="Goltry L."/>
            <person name="Tolentino E."/>
            <person name="Westbrock-Wadman S."/>
            <person name="Yuan Y."/>
            <person name="Brody L.L."/>
            <person name="Coulter S.N."/>
            <person name="Folger K.R."/>
            <person name="Kas A."/>
            <person name="Larbig K."/>
            <person name="Lim R.M."/>
            <person name="Smith K.A."/>
            <person name="Spencer D.H."/>
            <person name="Wong G.K.-S."/>
            <person name="Wu Z."/>
            <person name="Paulsen I.T."/>
            <person name="Reizer J."/>
            <person name="Saier M.H. Jr."/>
            <person name="Hancock R.E.W."/>
            <person name="Lory S."/>
            <person name="Olson M.V."/>
        </authorList>
    </citation>
    <scope>NUCLEOTIDE SEQUENCE [LARGE SCALE GENOMIC DNA]</scope>
    <source>
        <strain>ATCC 15692 / DSM 22644 / CIP 104116 / JCM 14847 / LMG 12228 / 1C / PRS 101 / PAO1</strain>
    </source>
</reference>
<comment type="function">
    <text evidence="1">Specifically methylates the pseudouridine at position 1915 (m3Psi1915) in 23S rRNA.</text>
</comment>
<comment type="catalytic activity">
    <reaction evidence="1">
        <text>pseudouridine(1915) in 23S rRNA + S-adenosyl-L-methionine = N(3)-methylpseudouridine(1915) in 23S rRNA + S-adenosyl-L-homocysteine + H(+)</text>
        <dbReference type="Rhea" id="RHEA:42752"/>
        <dbReference type="Rhea" id="RHEA-COMP:10221"/>
        <dbReference type="Rhea" id="RHEA-COMP:10222"/>
        <dbReference type="ChEBI" id="CHEBI:15378"/>
        <dbReference type="ChEBI" id="CHEBI:57856"/>
        <dbReference type="ChEBI" id="CHEBI:59789"/>
        <dbReference type="ChEBI" id="CHEBI:65314"/>
        <dbReference type="ChEBI" id="CHEBI:74486"/>
        <dbReference type="EC" id="2.1.1.177"/>
    </reaction>
</comment>
<comment type="subunit">
    <text evidence="1">Homodimer.</text>
</comment>
<comment type="subcellular location">
    <subcellularLocation>
        <location evidence="1">Cytoplasm</location>
    </subcellularLocation>
</comment>
<comment type="similarity">
    <text evidence="1">Belongs to the RNA methyltransferase RlmH family.</text>
</comment>
<evidence type="ECO:0000255" key="1">
    <source>
        <dbReference type="HAMAP-Rule" id="MF_00658"/>
    </source>
</evidence>
<proteinExistence type="inferred from homology"/>
<keyword id="KW-0963">Cytoplasm</keyword>
<keyword id="KW-0489">Methyltransferase</keyword>
<keyword id="KW-1185">Reference proteome</keyword>
<keyword id="KW-0698">rRNA processing</keyword>
<keyword id="KW-0949">S-adenosyl-L-methionine</keyword>
<keyword id="KW-0808">Transferase</keyword>
<name>RLMH_PSEAE</name>
<protein>
    <recommendedName>
        <fullName evidence="1">Ribosomal RNA large subunit methyltransferase H</fullName>
        <ecNumber evidence="1">2.1.1.177</ecNumber>
    </recommendedName>
    <alternativeName>
        <fullName evidence="1">23S rRNA (pseudouridine1915-N3)-methyltransferase</fullName>
    </alternativeName>
    <alternativeName>
        <fullName evidence="1">23S rRNA m3Psi1915 methyltransferase</fullName>
    </alternativeName>
    <alternativeName>
        <fullName evidence="1">rRNA (pseudouridine-N3-)-methyltransferase RlmH</fullName>
    </alternativeName>
</protein>
<gene>
    <name evidence="1" type="primary">rlmH</name>
    <name type="ordered locus">PA4004</name>
</gene>
<dbReference type="EC" id="2.1.1.177" evidence="1"/>
<dbReference type="EMBL" id="AE004091">
    <property type="protein sequence ID" value="AAG07391.1"/>
    <property type="molecule type" value="Genomic_DNA"/>
</dbReference>
<dbReference type="PIR" id="H83146">
    <property type="entry name" value="H83146"/>
</dbReference>
<dbReference type="RefSeq" id="NP_252693.1">
    <property type="nucleotide sequence ID" value="NC_002516.2"/>
</dbReference>
<dbReference type="RefSeq" id="WP_003093193.1">
    <property type="nucleotide sequence ID" value="NZ_QZGE01000038.1"/>
</dbReference>
<dbReference type="SMR" id="Q9HX23"/>
<dbReference type="FunCoup" id="Q9HX23">
    <property type="interactions" value="433"/>
</dbReference>
<dbReference type="STRING" id="208964.PA4004"/>
<dbReference type="PaxDb" id="208964-PA4004"/>
<dbReference type="GeneID" id="878973"/>
<dbReference type="KEGG" id="pae:PA4004"/>
<dbReference type="PATRIC" id="fig|208964.12.peg.4196"/>
<dbReference type="PseudoCAP" id="PA4004"/>
<dbReference type="HOGENOM" id="CLU_100552_1_0_6"/>
<dbReference type="InParanoid" id="Q9HX23"/>
<dbReference type="OrthoDB" id="9806643at2"/>
<dbReference type="PhylomeDB" id="Q9HX23"/>
<dbReference type="BioCyc" id="PAER208964:G1FZ6-4077-MONOMER"/>
<dbReference type="Proteomes" id="UP000002438">
    <property type="component" value="Chromosome"/>
</dbReference>
<dbReference type="GO" id="GO:0005737">
    <property type="term" value="C:cytoplasm"/>
    <property type="evidence" value="ECO:0007669"/>
    <property type="project" value="UniProtKB-SubCell"/>
</dbReference>
<dbReference type="GO" id="GO:0070038">
    <property type="term" value="F:rRNA (pseudouridine-N3-)-methyltransferase activity"/>
    <property type="evidence" value="ECO:0007669"/>
    <property type="project" value="UniProtKB-UniRule"/>
</dbReference>
<dbReference type="CDD" id="cd18081">
    <property type="entry name" value="RlmH-like"/>
    <property type="match status" value="1"/>
</dbReference>
<dbReference type="Gene3D" id="3.40.1280.10">
    <property type="match status" value="1"/>
</dbReference>
<dbReference type="HAMAP" id="MF_00658">
    <property type="entry name" value="23SrRNA_methyltr_H"/>
    <property type="match status" value="1"/>
</dbReference>
<dbReference type="InterPro" id="IPR029028">
    <property type="entry name" value="Alpha/beta_knot_MTases"/>
</dbReference>
<dbReference type="InterPro" id="IPR003742">
    <property type="entry name" value="RlmH-like"/>
</dbReference>
<dbReference type="InterPro" id="IPR029026">
    <property type="entry name" value="tRNA_m1G_MTases_N"/>
</dbReference>
<dbReference type="NCBIfam" id="NF000986">
    <property type="entry name" value="PRK00103.1-4"/>
    <property type="match status" value="1"/>
</dbReference>
<dbReference type="NCBIfam" id="TIGR00246">
    <property type="entry name" value="tRNA_RlmH_YbeA"/>
    <property type="match status" value="1"/>
</dbReference>
<dbReference type="PANTHER" id="PTHR33603">
    <property type="entry name" value="METHYLTRANSFERASE"/>
    <property type="match status" value="1"/>
</dbReference>
<dbReference type="PANTHER" id="PTHR33603:SF1">
    <property type="entry name" value="RIBOSOMAL RNA LARGE SUBUNIT METHYLTRANSFERASE H"/>
    <property type="match status" value="1"/>
</dbReference>
<dbReference type="Pfam" id="PF02590">
    <property type="entry name" value="SPOUT_MTase"/>
    <property type="match status" value="1"/>
</dbReference>
<dbReference type="PIRSF" id="PIRSF004505">
    <property type="entry name" value="MT_bac"/>
    <property type="match status" value="1"/>
</dbReference>
<dbReference type="SUPFAM" id="SSF75217">
    <property type="entry name" value="alpha/beta knot"/>
    <property type="match status" value="1"/>
</dbReference>
<sequence>MRLRLIAVGSRMPRWVEEGWQEYVKRLPAELSLELVEIPLNTRGKNADVARLIRQEGEAMLARVQPGERVVTLEVEGRPWSTEQLARELDRWRLDARTVNLMVGGPEGLAPEVCARSEQRWSLSPLTLPHPLVRILVGEQIYRAWTVLSGHPYHK</sequence>
<accession>Q9HX23</accession>
<organism>
    <name type="scientific">Pseudomonas aeruginosa (strain ATCC 15692 / DSM 22644 / CIP 104116 / JCM 14847 / LMG 12228 / 1C / PRS 101 / PAO1)</name>
    <dbReference type="NCBI Taxonomy" id="208964"/>
    <lineage>
        <taxon>Bacteria</taxon>
        <taxon>Pseudomonadati</taxon>
        <taxon>Pseudomonadota</taxon>
        <taxon>Gammaproteobacteria</taxon>
        <taxon>Pseudomonadales</taxon>
        <taxon>Pseudomonadaceae</taxon>
        <taxon>Pseudomonas</taxon>
    </lineage>
</organism>
<feature type="chain" id="PRO_0000198162" description="Ribosomal RNA large subunit methyltransferase H">
    <location>
        <begin position="1"/>
        <end position="155"/>
    </location>
</feature>
<feature type="binding site" evidence="1">
    <location>
        <position position="73"/>
    </location>
    <ligand>
        <name>S-adenosyl-L-methionine</name>
        <dbReference type="ChEBI" id="CHEBI:59789"/>
    </ligand>
</feature>
<feature type="binding site" evidence="1">
    <location>
        <position position="104"/>
    </location>
    <ligand>
        <name>S-adenosyl-L-methionine</name>
        <dbReference type="ChEBI" id="CHEBI:59789"/>
    </ligand>
</feature>
<feature type="binding site" evidence="1">
    <location>
        <begin position="123"/>
        <end position="128"/>
    </location>
    <ligand>
        <name>S-adenosyl-L-methionine</name>
        <dbReference type="ChEBI" id="CHEBI:59789"/>
    </ligand>
</feature>